<keyword id="KW-0143">Chaperone</keyword>
<keyword id="KW-1029">Fimbrium biogenesis</keyword>
<keyword id="KW-0393">Immunoglobulin domain</keyword>
<keyword id="KW-0574">Periplasm</keyword>
<keyword id="KW-1185">Reference proteome</keyword>
<keyword id="KW-0732">Signal</keyword>
<protein>
    <recommendedName>
        <fullName>Uncharacterized fimbrial chaperone YhcA</fullName>
    </recommendedName>
</protein>
<sequence>MLRHITFTVFITTSMNTLATGMVPETSVLLVDEKRGEASINIKNTDDHPSLLYTTIVDLPESNKSIRLIPTQPVIRVEAGQVQQVRFLLQATVPLQSEELKRVTFEGIPPKDDKSSRVTVSIRQDLPVLIHPASLPEERETWKFLEWRKNGDQIEISNPSNYVVRMTLQFKTLPSGKTGAINKTYFLPHTSTTTALTNATDTKVEFYPASRYGYRGNKYVTDLK</sequence>
<gene>
    <name type="primary">yhcA</name>
    <name type="ordered locus">b3215</name>
    <name type="ordered locus">JW3182</name>
</gene>
<comment type="function">
    <text evidence="1">Could be required for the biogenesis of a putative fimbria.</text>
</comment>
<comment type="subcellular location">
    <subcellularLocation>
        <location evidence="1">Periplasm</location>
    </subcellularLocation>
</comment>
<comment type="similarity">
    <text evidence="3">Belongs to the periplasmic pilus chaperone family.</text>
</comment>
<evidence type="ECO:0000250" key="1"/>
<evidence type="ECO:0000255" key="2"/>
<evidence type="ECO:0000305" key="3"/>
<feature type="signal peptide" evidence="2">
    <location>
        <begin position="1"/>
        <end position="19"/>
    </location>
</feature>
<feature type="chain" id="PRO_0000009295" description="Uncharacterized fimbrial chaperone YhcA">
    <location>
        <begin position="20"/>
        <end position="224"/>
    </location>
</feature>
<feature type="sequence conflict" description="In Ref. 1." evidence="3" ref="1">
    <original>PETSVLLVDEKRGEASINIKNTDDHPSLLYTTIVD</original>
    <variation>LKHQYCWLMKSVVKLVLILRIQMIILHCFTPPLLI</variation>
    <location>
        <begin position="24"/>
        <end position="58"/>
    </location>
</feature>
<feature type="sequence conflict" description="In Ref. 1; AAA23910." evidence="3" ref="1">
    <original>VEFYPASRYGYRGNKYVTDLK</original>
    <variation>GRVLPSQPIWLSR</variation>
    <location>
        <begin position="204"/>
        <end position="224"/>
    </location>
</feature>
<proteinExistence type="inferred from homology"/>
<reference key="1">
    <citation type="journal article" date="1992" name="Mol. Microbiol.">
        <title>gltF, a member of the gltBDF operon of Escherichia coli, is involved in nitrogen-regulated gene expression.</title>
        <authorList>
            <person name="Castano I."/>
            <person name="Flores N."/>
            <person name="Valle F."/>
            <person name="Covarrubias A.A."/>
            <person name="Bolivar F."/>
        </authorList>
    </citation>
    <scope>NUCLEOTIDE SEQUENCE [GENOMIC DNA]</scope>
    <source>
        <strain>K12</strain>
    </source>
</reference>
<reference key="2">
    <citation type="journal article" date="1997" name="Science">
        <title>The complete genome sequence of Escherichia coli K-12.</title>
        <authorList>
            <person name="Blattner F.R."/>
            <person name="Plunkett G. III"/>
            <person name="Bloch C.A."/>
            <person name="Perna N.T."/>
            <person name="Burland V."/>
            <person name="Riley M."/>
            <person name="Collado-Vides J."/>
            <person name="Glasner J.D."/>
            <person name="Rode C.K."/>
            <person name="Mayhew G.F."/>
            <person name="Gregor J."/>
            <person name="Davis N.W."/>
            <person name="Kirkpatrick H.A."/>
            <person name="Goeden M.A."/>
            <person name="Rose D.J."/>
            <person name="Mau B."/>
            <person name="Shao Y."/>
        </authorList>
    </citation>
    <scope>NUCLEOTIDE SEQUENCE [LARGE SCALE GENOMIC DNA]</scope>
    <source>
        <strain>K12 / MG1655 / ATCC 47076</strain>
    </source>
</reference>
<reference key="3">
    <citation type="journal article" date="2006" name="Mol. Syst. Biol.">
        <title>Highly accurate genome sequences of Escherichia coli K-12 strains MG1655 and W3110.</title>
        <authorList>
            <person name="Hayashi K."/>
            <person name="Morooka N."/>
            <person name="Yamamoto Y."/>
            <person name="Fujita K."/>
            <person name="Isono K."/>
            <person name="Choi S."/>
            <person name="Ohtsubo E."/>
            <person name="Baba T."/>
            <person name="Wanner B.L."/>
            <person name="Mori H."/>
            <person name="Horiuchi T."/>
        </authorList>
    </citation>
    <scope>NUCLEOTIDE SEQUENCE [LARGE SCALE GENOMIC DNA]</scope>
    <source>
        <strain>K12 / W3110 / ATCC 27325 / DSM 5911</strain>
    </source>
</reference>
<accession>P28722</accession>
<accession>Q2M8Z7</accession>
<name>YHCA_ECOLI</name>
<organism>
    <name type="scientific">Escherichia coli (strain K12)</name>
    <dbReference type="NCBI Taxonomy" id="83333"/>
    <lineage>
        <taxon>Bacteria</taxon>
        <taxon>Pseudomonadati</taxon>
        <taxon>Pseudomonadota</taxon>
        <taxon>Gammaproteobacteria</taxon>
        <taxon>Enterobacterales</taxon>
        <taxon>Enterobacteriaceae</taxon>
        <taxon>Escherichia</taxon>
    </lineage>
</organism>
<dbReference type="EMBL" id="M74162">
    <property type="protein sequence ID" value="AAA23910.1"/>
    <property type="molecule type" value="Genomic_DNA"/>
</dbReference>
<dbReference type="EMBL" id="U18997">
    <property type="protein sequence ID" value="AAA58017.1"/>
    <property type="molecule type" value="Genomic_DNA"/>
</dbReference>
<dbReference type="EMBL" id="U00096">
    <property type="protein sequence ID" value="AAC76247.1"/>
    <property type="molecule type" value="Genomic_DNA"/>
</dbReference>
<dbReference type="EMBL" id="AP009048">
    <property type="protein sequence ID" value="BAE77259.1"/>
    <property type="molecule type" value="Genomic_DNA"/>
</dbReference>
<dbReference type="PIR" id="A65113">
    <property type="entry name" value="A65113"/>
</dbReference>
<dbReference type="RefSeq" id="NP_417682.1">
    <property type="nucleotide sequence ID" value="NC_000913.3"/>
</dbReference>
<dbReference type="RefSeq" id="WP_001311157.1">
    <property type="nucleotide sequence ID" value="NZ_SSZK01000007.1"/>
</dbReference>
<dbReference type="SMR" id="P28722"/>
<dbReference type="BioGRID" id="4259287">
    <property type="interactions" value="20"/>
</dbReference>
<dbReference type="BioGRID" id="852053">
    <property type="interactions" value="3"/>
</dbReference>
<dbReference type="FunCoup" id="P28722">
    <property type="interactions" value="67"/>
</dbReference>
<dbReference type="IntAct" id="P28722">
    <property type="interactions" value="14"/>
</dbReference>
<dbReference type="STRING" id="511145.b3215"/>
<dbReference type="PaxDb" id="511145-b3215"/>
<dbReference type="EnsemblBacteria" id="AAC76247">
    <property type="protein sequence ID" value="AAC76247"/>
    <property type="gene ID" value="b3215"/>
</dbReference>
<dbReference type="GeneID" id="947741"/>
<dbReference type="KEGG" id="ecj:JW3182"/>
<dbReference type="KEGG" id="eco:b3215"/>
<dbReference type="KEGG" id="ecoc:C3026_17490"/>
<dbReference type="PATRIC" id="fig|1411691.4.peg.3514"/>
<dbReference type="EchoBASE" id="EB1477"/>
<dbReference type="eggNOG" id="COG3121">
    <property type="taxonomic scope" value="Bacteria"/>
</dbReference>
<dbReference type="HOGENOM" id="CLU_070768_1_2_6"/>
<dbReference type="InParanoid" id="P28722"/>
<dbReference type="OMA" id="LPHAWIL"/>
<dbReference type="OrthoDB" id="8585185at2"/>
<dbReference type="PhylomeDB" id="P28722"/>
<dbReference type="BioCyc" id="EcoCyc:EG11515-MONOMER"/>
<dbReference type="PRO" id="PR:P28722"/>
<dbReference type="Proteomes" id="UP000000625">
    <property type="component" value="Chromosome"/>
</dbReference>
<dbReference type="GO" id="GO:0030288">
    <property type="term" value="C:outer membrane-bounded periplasmic space"/>
    <property type="evidence" value="ECO:0000318"/>
    <property type="project" value="GO_Central"/>
</dbReference>
<dbReference type="GO" id="GO:0044183">
    <property type="term" value="F:protein folding chaperone"/>
    <property type="evidence" value="ECO:0000318"/>
    <property type="project" value="GO_Central"/>
</dbReference>
<dbReference type="GO" id="GO:0071555">
    <property type="term" value="P:cell wall organization"/>
    <property type="evidence" value="ECO:0007669"/>
    <property type="project" value="InterPro"/>
</dbReference>
<dbReference type="GO" id="GO:0061077">
    <property type="term" value="P:chaperone-mediated protein folding"/>
    <property type="evidence" value="ECO:0000318"/>
    <property type="project" value="GO_Central"/>
</dbReference>
<dbReference type="Gene3D" id="2.60.40.10">
    <property type="entry name" value="Immunoglobulins"/>
    <property type="match status" value="2"/>
</dbReference>
<dbReference type="InterPro" id="IPR013783">
    <property type="entry name" value="Ig-like_fold"/>
</dbReference>
<dbReference type="InterPro" id="IPR008962">
    <property type="entry name" value="PapD-like_sf"/>
</dbReference>
<dbReference type="InterPro" id="IPR050643">
    <property type="entry name" value="Periplasmic_pilus_chap"/>
</dbReference>
<dbReference type="InterPro" id="IPR036316">
    <property type="entry name" value="Pili_assmbl_chap_C_dom_sf"/>
</dbReference>
<dbReference type="InterPro" id="IPR016147">
    <property type="entry name" value="Pili_assmbl_chaperone_N"/>
</dbReference>
<dbReference type="NCBIfam" id="NF007392">
    <property type="entry name" value="PRK09918.1"/>
    <property type="match status" value="1"/>
</dbReference>
<dbReference type="PANTHER" id="PTHR30251:SF3">
    <property type="entry name" value="FIMBRIAL CHAPARONE PROTEIN"/>
    <property type="match status" value="1"/>
</dbReference>
<dbReference type="PANTHER" id="PTHR30251">
    <property type="entry name" value="PILUS ASSEMBLY CHAPERONE"/>
    <property type="match status" value="1"/>
</dbReference>
<dbReference type="Pfam" id="PF00345">
    <property type="entry name" value="PapD_N"/>
    <property type="match status" value="1"/>
</dbReference>
<dbReference type="SUPFAM" id="SSF49354">
    <property type="entry name" value="PapD-like"/>
    <property type="match status" value="1"/>
</dbReference>
<dbReference type="SUPFAM" id="SSF49584">
    <property type="entry name" value="Periplasmic chaperone C-domain"/>
    <property type="match status" value="1"/>
</dbReference>